<reference key="1">
    <citation type="journal article" date="2001" name="Science">
        <title>Mechanisms of evolution in Rickettsia conorii and R. prowazekii.</title>
        <authorList>
            <person name="Ogata H."/>
            <person name="Audic S."/>
            <person name="Renesto-Audiffren P."/>
            <person name="Fournier P.-E."/>
            <person name="Barbe V."/>
            <person name="Samson D."/>
            <person name="Roux V."/>
            <person name="Cossart P."/>
            <person name="Weissenbach J."/>
            <person name="Claverie J.-M."/>
            <person name="Raoult D."/>
        </authorList>
    </citation>
    <scope>NUCLEOTIDE SEQUENCE [LARGE SCALE GENOMIC DNA]</scope>
    <source>
        <strain>ATCC VR-613 / Malish 7</strain>
    </source>
</reference>
<comment type="function">
    <text evidence="1">Part of the ABC transporter complex ZnuABC involved in zinc import. Responsible for energy coupling to the transport system.</text>
</comment>
<comment type="catalytic activity">
    <reaction evidence="1">
        <text>Zn(2+)(out) + ATP(in) + H2O(in) = Zn(2+)(in) + ADP(in) + phosphate(in) + H(+)(in)</text>
        <dbReference type="Rhea" id="RHEA:29795"/>
        <dbReference type="ChEBI" id="CHEBI:15377"/>
        <dbReference type="ChEBI" id="CHEBI:15378"/>
        <dbReference type="ChEBI" id="CHEBI:29105"/>
        <dbReference type="ChEBI" id="CHEBI:30616"/>
        <dbReference type="ChEBI" id="CHEBI:43474"/>
        <dbReference type="ChEBI" id="CHEBI:456216"/>
        <dbReference type="EC" id="7.2.2.20"/>
    </reaction>
</comment>
<comment type="subunit">
    <text evidence="1">The complex is composed of two ATP-binding proteins (ZnuC), two transmembrane proteins (ZnuB) and a solute-binding protein (ZnuA).</text>
</comment>
<comment type="subcellular location">
    <subcellularLocation>
        <location evidence="1">Cell inner membrane</location>
        <topology evidence="1">Peripheral membrane protein</topology>
    </subcellularLocation>
</comment>
<comment type="similarity">
    <text evidence="1">Belongs to the ABC transporter superfamily. Zinc importer (TC 3.A.1.15.5) family.</text>
</comment>
<protein>
    <recommendedName>
        <fullName evidence="1">Zinc import ATP-binding protein ZnuC</fullName>
        <ecNumber evidence="1">7.2.2.20</ecNumber>
    </recommendedName>
</protein>
<dbReference type="EC" id="7.2.2.20" evidence="1"/>
<dbReference type="EMBL" id="AE006914">
    <property type="protein sequence ID" value="AAL03827.1"/>
    <property type="molecule type" value="Genomic_DNA"/>
</dbReference>
<dbReference type="PIR" id="A97861">
    <property type="entry name" value="A97861"/>
</dbReference>
<dbReference type="RefSeq" id="WP_010977849.1">
    <property type="nucleotide sequence ID" value="NC_003103.1"/>
</dbReference>
<dbReference type="SMR" id="Q92G36"/>
<dbReference type="GeneID" id="928440"/>
<dbReference type="KEGG" id="rco:RC1289"/>
<dbReference type="PATRIC" id="fig|272944.4.peg.1481"/>
<dbReference type="HOGENOM" id="CLU_000604_1_11_5"/>
<dbReference type="Proteomes" id="UP000000816">
    <property type="component" value="Chromosome"/>
</dbReference>
<dbReference type="GO" id="GO:0005886">
    <property type="term" value="C:plasma membrane"/>
    <property type="evidence" value="ECO:0007669"/>
    <property type="project" value="UniProtKB-SubCell"/>
</dbReference>
<dbReference type="GO" id="GO:0015633">
    <property type="term" value="F:ABC-type zinc transporter activity"/>
    <property type="evidence" value="ECO:0007669"/>
    <property type="project" value="UniProtKB-EC"/>
</dbReference>
<dbReference type="GO" id="GO:0005524">
    <property type="term" value="F:ATP binding"/>
    <property type="evidence" value="ECO:0007669"/>
    <property type="project" value="UniProtKB-KW"/>
</dbReference>
<dbReference type="GO" id="GO:0016887">
    <property type="term" value="F:ATP hydrolysis activity"/>
    <property type="evidence" value="ECO:0007669"/>
    <property type="project" value="InterPro"/>
</dbReference>
<dbReference type="GO" id="GO:0010043">
    <property type="term" value="P:response to zinc ion"/>
    <property type="evidence" value="ECO:0007669"/>
    <property type="project" value="TreeGrafter"/>
</dbReference>
<dbReference type="Gene3D" id="3.40.50.300">
    <property type="entry name" value="P-loop containing nucleotide triphosphate hydrolases"/>
    <property type="match status" value="1"/>
</dbReference>
<dbReference type="InterPro" id="IPR003593">
    <property type="entry name" value="AAA+_ATPase"/>
</dbReference>
<dbReference type="InterPro" id="IPR003439">
    <property type="entry name" value="ABC_transporter-like_ATP-bd"/>
</dbReference>
<dbReference type="InterPro" id="IPR017871">
    <property type="entry name" value="ABC_transporter-like_CS"/>
</dbReference>
<dbReference type="InterPro" id="IPR050153">
    <property type="entry name" value="Metal_Ion_Import_ABC"/>
</dbReference>
<dbReference type="InterPro" id="IPR027417">
    <property type="entry name" value="P-loop_NTPase"/>
</dbReference>
<dbReference type="PANTHER" id="PTHR42734">
    <property type="entry name" value="METAL TRANSPORT SYSTEM ATP-BINDING PROTEIN TM_0124-RELATED"/>
    <property type="match status" value="1"/>
</dbReference>
<dbReference type="PANTHER" id="PTHR42734:SF9">
    <property type="entry name" value="ZINC IMPORT ATP-BINDING PROTEIN ZNUC"/>
    <property type="match status" value="1"/>
</dbReference>
<dbReference type="Pfam" id="PF00005">
    <property type="entry name" value="ABC_tran"/>
    <property type="match status" value="1"/>
</dbReference>
<dbReference type="SMART" id="SM00382">
    <property type="entry name" value="AAA"/>
    <property type="match status" value="1"/>
</dbReference>
<dbReference type="SUPFAM" id="SSF52540">
    <property type="entry name" value="P-loop containing nucleoside triphosphate hydrolases"/>
    <property type="match status" value="1"/>
</dbReference>
<dbReference type="PROSITE" id="PS00211">
    <property type="entry name" value="ABC_TRANSPORTER_1"/>
    <property type="match status" value="1"/>
</dbReference>
<dbReference type="PROSITE" id="PS50893">
    <property type="entry name" value="ABC_TRANSPORTER_2"/>
    <property type="match status" value="1"/>
</dbReference>
<dbReference type="PROSITE" id="PS51298">
    <property type="entry name" value="ZNUC"/>
    <property type="match status" value="1"/>
</dbReference>
<keyword id="KW-0067">ATP-binding</keyword>
<keyword id="KW-0997">Cell inner membrane</keyword>
<keyword id="KW-1003">Cell membrane</keyword>
<keyword id="KW-0406">Ion transport</keyword>
<keyword id="KW-0472">Membrane</keyword>
<keyword id="KW-0547">Nucleotide-binding</keyword>
<keyword id="KW-1278">Translocase</keyword>
<keyword id="KW-0813">Transport</keyword>
<keyword id="KW-0862">Zinc</keyword>
<keyword id="KW-0864">Zinc transport</keyword>
<proteinExistence type="inferred from homology"/>
<name>ZNUC_RICCN</name>
<sequence length="233" mass="26072">MQKPIIEFRNVSKKFGNKLPINNVSFTVKKNNITTLIGPNGAGKTTIVRLMLGLEKPTSGEIIIDPKLKIGYVPQKFGLTPDLPITVKNFLELLAPSNFNNNIKEINSFIDLEHIKDQEISKLSGGQFQKVVLACSIVNNPDLIILDEPLQSLDVTSQQEFYQLINLIRKKLNITVFMISHDLFTVIKNSDQVICLNGHICCSGIPNEITPNSEFSNALSALGFYTHHHDHKH</sequence>
<evidence type="ECO:0000255" key="1">
    <source>
        <dbReference type="HAMAP-Rule" id="MF_01725"/>
    </source>
</evidence>
<organism>
    <name type="scientific">Rickettsia conorii (strain ATCC VR-613 / Malish 7)</name>
    <dbReference type="NCBI Taxonomy" id="272944"/>
    <lineage>
        <taxon>Bacteria</taxon>
        <taxon>Pseudomonadati</taxon>
        <taxon>Pseudomonadota</taxon>
        <taxon>Alphaproteobacteria</taxon>
        <taxon>Rickettsiales</taxon>
        <taxon>Rickettsiaceae</taxon>
        <taxon>Rickettsieae</taxon>
        <taxon>Rickettsia</taxon>
        <taxon>spotted fever group</taxon>
    </lineage>
</organism>
<gene>
    <name evidence="1" type="primary">znuC</name>
    <name type="ordered locus">RC1289</name>
</gene>
<feature type="chain" id="PRO_0000281540" description="Zinc import ATP-binding protein ZnuC">
    <location>
        <begin position="1"/>
        <end position="233"/>
    </location>
</feature>
<feature type="domain" description="ABC transporter" evidence="1">
    <location>
        <begin position="6"/>
        <end position="222"/>
    </location>
</feature>
<feature type="binding site" evidence="1">
    <location>
        <begin position="38"/>
        <end position="45"/>
    </location>
    <ligand>
        <name>ATP</name>
        <dbReference type="ChEBI" id="CHEBI:30616"/>
    </ligand>
</feature>
<accession>Q92G36</accession>